<reference key="1">
    <citation type="journal article" date="2006" name="PLoS Biol.">
        <title>The genome of deep-sea vent chemolithoautotroph Thiomicrospira crunogena XCL-2.</title>
        <authorList>
            <person name="Scott K.M."/>
            <person name="Sievert S.M."/>
            <person name="Abril F.N."/>
            <person name="Ball L.A."/>
            <person name="Barrett C.J."/>
            <person name="Blake R.A."/>
            <person name="Boller A.J."/>
            <person name="Chain P.S.G."/>
            <person name="Clark J.A."/>
            <person name="Davis C.R."/>
            <person name="Detter C."/>
            <person name="Do K.F."/>
            <person name="Dobrinski K.P."/>
            <person name="Faza B.I."/>
            <person name="Fitzpatrick K.A."/>
            <person name="Freyermuth S.K."/>
            <person name="Harmer T.L."/>
            <person name="Hauser L.J."/>
            <person name="Huegler M."/>
            <person name="Kerfeld C.A."/>
            <person name="Klotz M.G."/>
            <person name="Kong W.W."/>
            <person name="Land M."/>
            <person name="Lapidus A."/>
            <person name="Larimer F.W."/>
            <person name="Longo D.L."/>
            <person name="Lucas S."/>
            <person name="Malfatti S.A."/>
            <person name="Massey S.E."/>
            <person name="Martin D.D."/>
            <person name="McCuddin Z."/>
            <person name="Meyer F."/>
            <person name="Moore J.L."/>
            <person name="Ocampo L.H. Jr."/>
            <person name="Paul J.H."/>
            <person name="Paulsen I.T."/>
            <person name="Reep D.K."/>
            <person name="Ren Q."/>
            <person name="Ross R.L."/>
            <person name="Sato P.Y."/>
            <person name="Thomas P."/>
            <person name="Tinkham L.E."/>
            <person name="Zeruth G.T."/>
        </authorList>
    </citation>
    <scope>NUCLEOTIDE SEQUENCE [LARGE SCALE GENOMIC DNA]</scope>
    <source>
        <strain>DSM 25203 / XCL-2</strain>
    </source>
</reference>
<feature type="chain" id="PRO_1000053521" description="Phosphatidylglycerol--prolipoprotein diacylglyceryl transferase">
    <location>
        <begin position="1"/>
        <end position="266"/>
    </location>
</feature>
<feature type="transmembrane region" description="Helical" evidence="1">
    <location>
        <begin position="14"/>
        <end position="34"/>
    </location>
</feature>
<feature type="transmembrane region" description="Helical" evidence="1">
    <location>
        <begin position="55"/>
        <end position="75"/>
    </location>
</feature>
<feature type="transmembrane region" description="Helical" evidence="1">
    <location>
        <begin position="91"/>
        <end position="111"/>
    </location>
</feature>
<feature type="transmembrane region" description="Helical" evidence="1">
    <location>
        <begin position="117"/>
        <end position="137"/>
    </location>
</feature>
<feature type="transmembrane region" description="Helical" evidence="1">
    <location>
        <begin position="172"/>
        <end position="192"/>
    </location>
</feature>
<feature type="transmembrane region" description="Helical" evidence="1">
    <location>
        <begin position="201"/>
        <end position="221"/>
    </location>
</feature>
<feature type="transmembrane region" description="Helical" evidence="1">
    <location>
        <begin position="235"/>
        <end position="255"/>
    </location>
</feature>
<feature type="binding site" evidence="1">
    <location>
        <position position="138"/>
    </location>
    <ligand>
        <name>a 1,2-diacyl-sn-glycero-3-phospho-(1'-sn-glycerol)</name>
        <dbReference type="ChEBI" id="CHEBI:64716"/>
    </ligand>
</feature>
<name>LGT_HYDCU</name>
<comment type="function">
    <text evidence="1">Catalyzes the transfer of the diacylglyceryl group from phosphatidylglycerol to the sulfhydryl group of the N-terminal cysteine of a prolipoprotein, the first step in the formation of mature lipoproteins.</text>
</comment>
<comment type="catalytic activity">
    <reaction evidence="1">
        <text>L-cysteinyl-[prolipoprotein] + a 1,2-diacyl-sn-glycero-3-phospho-(1'-sn-glycerol) = an S-1,2-diacyl-sn-glyceryl-L-cysteinyl-[prolipoprotein] + sn-glycerol 1-phosphate + H(+)</text>
        <dbReference type="Rhea" id="RHEA:56712"/>
        <dbReference type="Rhea" id="RHEA-COMP:14679"/>
        <dbReference type="Rhea" id="RHEA-COMP:14680"/>
        <dbReference type="ChEBI" id="CHEBI:15378"/>
        <dbReference type="ChEBI" id="CHEBI:29950"/>
        <dbReference type="ChEBI" id="CHEBI:57685"/>
        <dbReference type="ChEBI" id="CHEBI:64716"/>
        <dbReference type="ChEBI" id="CHEBI:140658"/>
        <dbReference type="EC" id="2.5.1.145"/>
    </reaction>
</comment>
<comment type="pathway">
    <text evidence="1">Protein modification; lipoprotein biosynthesis (diacylglyceryl transfer).</text>
</comment>
<comment type="subcellular location">
    <subcellularLocation>
        <location evidence="1">Cell inner membrane</location>
        <topology evidence="1">Multi-pass membrane protein</topology>
    </subcellularLocation>
</comment>
<comment type="similarity">
    <text evidence="1">Belongs to the Lgt family.</text>
</comment>
<dbReference type="EC" id="2.5.1.145" evidence="1"/>
<dbReference type="EMBL" id="CP000109">
    <property type="protein sequence ID" value="ABB41167.1"/>
    <property type="molecule type" value="Genomic_DNA"/>
</dbReference>
<dbReference type="SMR" id="Q31I56"/>
<dbReference type="STRING" id="317025.Tcr_0571"/>
<dbReference type="KEGG" id="tcx:Tcr_0571"/>
<dbReference type="eggNOG" id="COG0682">
    <property type="taxonomic scope" value="Bacteria"/>
</dbReference>
<dbReference type="HOGENOM" id="CLU_013386_1_0_6"/>
<dbReference type="OrthoDB" id="871140at2"/>
<dbReference type="UniPathway" id="UPA00664"/>
<dbReference type="GO" id="GO:0005886">
    <property type="term" value="C:plasma membrane"/>
    <property type="evidence" value="ECO:0007669"/>
    <property type="project" value="UniProtKB-SubCell"/>
</dbReference>
<dbReference type="GO" id="GO:0008961">
    <property type="term" value="F:phosphatidylglycerol-prolipoprotein diacylglyceryl transferase activity"/>
    <property type="evidence" value="ECO:0007669"/>
    <property type="project" value="UniProtKB-UniRule"/>
</dbReference>
<dbReference type="GO" id="GO:0042158">
    <property type="term" value="P:lipoprotein biosynthetic process"/>
    <property type="evidence" value="ECO:0007669"/>
    <property type="project" value="UniProtKB-UniRule"/>
</dbReference>
<dbReference type="HAMAP" id="MF_01147">
    <property type="entry name" value="Lgt"/>
    <property type="match status" value="1"/>
</dbReference>
<dbReference type="InterPro" id="IPR001640">
    <property type="entry name" value="Lgt"/>
</dbReference>
<dbReference type="NCBIfam" id="TIGR00544">
    <property type="entry name" value="lgt"/>
    <property type="match status" value="1"/>
</dbReference>
<dbReference type="PANTHER" id="PTHR30589:SF0">
    <property type="entry name" value="PHOSPHATIDYLGLYCEROL--PROLIPOPROTEIN DIACYLGLYCERYL TRANSFERASE"/>
    <property type="match status" value="1"/>
</dbReference>
<dbReference type="PANTHER" id="PTHR30589">
    <property type="entry name" value="PROLIPOPROTEIN DIACYLGLYCERYL TRANSFERASE"/>
    <property type="match status" value="1"/>
</dbReference>
<dbReference type="Pfam" id="PF01790">
    <property type="entry name" value="LGT"/>
    <property type="match status" value="1"/>
</dbReference>
<dbReference type="PROSITE" id="PS01311">
    <property type="entry name" value="LGT"/>
    <property type="match status" value="1"/>
</dbReference>
<evidence type="ECO:0000255" key="1">
    <source>
        <dbReference type="HAMAP-Rule" id="MF_01147"/>
    </source>
</evidence>
<proteinExistence type="inferred from homology"/>
<keyword id="KW-0997">Cell inner membrane</keyword>
<keyword id="KW-1003">Cell membrane</keyword>
<keyword id="KW-0472">Membrane</keyword>
<keyword id="KW-0808">Transferase</keyword>
<keyword id="KW-0812">Transmembrane</keyword>
<keyword id="KW-1133">Transmembrane helix</keyword>
<protein>
    <recommendedName>
        <fullName evidence="1">Phosphatidylglycerol--prolipoprotein diacylglyceryl transferase</fullName>
        <ecNumber evidence="1">2.5.1.145</ecNumber>
    </recommendedName>
</protein>
<organism>
    <name type="scientific">Hydrogenovibrio crunogenus (strain DSM 25203 / XCL-2)</name>
    <name type="common">Thiomicrospira crunogena</name>
    <dbReference type="NCBI Taxonomy" id="317025"/>
    <lineage>
        <taxon>Bacteria</taxon>
        <taxon>Pseudomonadati</taxon>
        <taxon>Pseudomonadota</taxon>
        <taxon>Gammaproteobacteria</taxon>
        <taxon>Thiotrichales</taxon>
        <taxon>Piscirickettsiaceae</taxon>
        <taxon>Hydrogenovibrio</taxon>
    </lineage>
</organism>
<accession>Q31I56</accession>
<sequence>MWTYPEIDPVALTFGPLQIHWYGLMYLAGFAFFWGYGSYKAKFSDHWTAERVGDFLFYGALGVILGGRIGYILFYDLAHYIAEPLDVFQVWKGGMAFHGGLIGVMVAMWLFARKMQVSMFVVADFVAPMVPVGLFFGRIGNFINGELWGKVTDSSLGMKVYDPTLNMVVSKYPTQLLEALLEGIVLFIILMFYTRSPRPLGAASGLFIGLYGLFRFYVEFFRLPDPQLGYLFWGWVTMGQLLSLPMILIGFALVVWAYRNNRVMAP</sequence>
<gene>
    <name evidence="1" type="primary">lgt</name>
    <name type="ordered locus">Tcr_0571</name>
</gene>